<comment type="subcellular location">
    <subcellularLocation>
        <location evidence="2">Cell membrane</location>
        <topology evidence="2">Multi-pass membrane protein</topology>
    </subcellularLocation>
</comment>
<dbReference type="EMBL" id="L77117">
    <property type="protein sequence ID" value="AAB98700.1"/>
    <property type="molecule type" value="Genomic_DNA"/>
</dbReference>
<dbReference type="PIR" id="B64388">
    <property type="entry name" value="B64388"/>
</dbReference>
<dbReference type="SMR" id="Q58117"/>
<dbReference type="STRING" id="243232.MJ_0706"/>
<dbReference type="TCDB" id="9.B.98.1.5">
    <property type="family name" value="the duf95 (duf95) family"/>
</dbReference>
<dbReference type="PaxDb" id="243232-MJ_0706"/>
<dbReference type="DNASU" id="1451574"/>
<dbReference type="EnsemblBacteria" id="AAB98700">
    <property type="protein sequence ID" value="AAB98700"/>
    <property type="gene ID" value="MJ_0706"/>
</dbReference>
<dbReference type="KEGG" id="mja:MJ_0706"/>
<dbReference type="eggNOG" id="arCOG01994">
    <property type="taxonomic scope" value="Archaea"/>
</dbReference>
<dbReference type="HOGENOM" id="CLU_099320_0_1_2"/>
<dbReference type="InParanoid" id="Q58117"/>
<dbReference type="OrthoDB" id="86288at2157"/>
<dbReference type="PhylomeDB" id="Q58117"/>
<dbReference type="Proteomes" id="UP000000805">
    <property type="component" value="Chromosome"/>
</dbReference>
<dbReference type="GO" id="GO:0005886">
    <property type="term" value="C:plasma membrane"/>
    <property type="evidence" value="ECO:0007669"/>
    <property type="project" value="UniProtKB-SubCell"/>
</dbReference>
<dbReference type="InterPro" id="IPR002798">
    <property type="entry name" value="SpoIIM-like"/>
</dbReference>
<dbReference type="PANTHER" id="PTHR35337">
    <property type="entry name" value="SLR1478 PROTEIN"/>
    <property type="match status" value="1"/>
</dbReference>
<dbReference type="PANTHER" id="PTHR35337:SF1">
    <property type="entry name" value="SLR1478 PROTEIN"/>
    <property type="match status" value="1"/>
</dbReference>
<dbReference type="Pfam" id="PF01944">
    <property type="entry name" value="SpoIIM"/>
    <property type="match status" value="1"/>
</dbReference>
<organism>
    <name type="scientific">Methanocaldococcus jannaschii (strain ATCC 43067 / DSM 2661 / JAL-1 / JCM 10045 / NBRC 100440)</name>
    <name type="common">Methanococcus jannaschii</name>
    <dbReference type="NCBI Taxonomy" id="243232"/>
    <lineage>
        <taxon>Archaea</taxon>
        <taxon>Methanobacteriati</taxon>
        <taxon>Methanobacteriota</taxon>
        <taxon>Methanomada group</taxon>
        <taxon>Methanococci</taxon>
        <taxon>Methanococcales</taxon>
        <taxon>Methanocaldococcaceae</taxon>
        <taxon>Methanocaldococcus</taxon>
    </lineage>
</organism>
<gene>
    <name type="ordered locus">MJ0706</name>
</gene>
<sequence length="214" mass="24497">MRDAYLMMVLMDALKEIFDLKEILKSPIRNKKVILFVSLVFILSLVLLYILVVNIKYFSYLGDIIFQNFQKHVENLKITLNEDNLHIILAIWKNNLTVCILNYILGIFSLFVIAVNSYILSYVLYKFGAESFIYLVLPHGIIEIPALILSASGGVLFNMGLVNFLINIKFGTKREVLYYIKESLKLLILSIILFIVAGIVEGTITFKIAKIMFS</sequence>
<reference key="1">
    <citation type="journal article" date="1996" name="Science">
        <title>Complete genome sequence of the methanogenic archaeon, Methanococcus jannaschii.</title>
        <authorList>
            <person name="Bult C.J."/>
            <person name="White O."/>
            <person name="Olsen G.J."/>
            <person name="Zhou L."/>
            <person name="Fleischmann R.D."/>
            <person name="Sutton G.G."/>
            <person name="Blake J.A."/>
            <person name="FitzGerald L.M."/>
            <person name="Clayton R.A."/>
            <person name="Gocayne J.D."/>
            <person name="Kerlavage A.R."/>
            <person name="Dougherty B.A."/>
            <person name="Tomb J.-F."/>
            <person name="Adams M.D."/>
            <person name="Reich C.I."/>
            <person name="Overbeek R."/>
            <person name="Kirkness E.F."/>
            <person name="Weinstock K.G."/>
            <person name="Merrick J.M."/>
            <person name="Glodek A."/>
            <person name="Scott J.L."/>
            <person name="Geoghagen N.S.M."/>
            <person name="Weidman J.F."/>
            <person name="Fuhrmann J.L."/>
            <person name="Nguyen D."/>
            <person name="Utterback T.R."/>
            <person name="Kelley J.M."/>
            <person name="Peterson J.D."/>
            <person name="Sadow P.W."/>
            <person name="Hanna M.C."/>
            <person name="Cotton M.D."/>
            <person name="Roberts K.M."/>
            <person name="Hurst M.A."/>
            <person name="Kaine B.P."/>
            <person name="Borodovsky M."/>
            <person name="Klenk H.-P."/>
            <person name="Fraser C.M."/>
            <person name="Smith H.O."/>
            <person name="Woese C.R."/>
            <person name="Venter J.C."/>
        </authorList>
    </citation>
    <scope>NUCLEOTIDE SEQUENCE [LARGE SCALE GENOMIC DNA]</scope>
    <source>
        <strain>ATCC 43067 / DSM 2661 / JAL-1 / JCM 10045 / NBRC 100440</strain>
    </source>
</reference>
<keyword id="KW-1003">Cell membrane</keyword>
<keyword id="KW-0472">Membrane</keyword>
<keyword id="KW-1185">Reference proteome</keyword>
<keyword id="KW-0812">Transmembrane</keyword>
<keyword id="KW-1133">Transmembrane helix</keyword>
<accession>Q58117</accession>
<name>Y706_METJA</name>
<feature type="chain" id="PRO_0000106998" description="Uncharacterized protein MJ0706">
    <location>
        <begin position="1"/>
        <end position="214"/>
    </location>
</feature>
<feature type="transmembrane region" description="Helical" evidence="1">
    <location>
        <begin position="33"/>
        <end position="53"/>
    </location>
</feature>
<feature type="transmembrane region" description="Helical" evidence="1">
    <location>
        <begin position="104"/>
        <end position="124"/>
    </location>
</feature>
<feature type="transmembrane region" description="Helical" evidence="1">
    <location>
        <begin position="132"/>
        <end position="152"/>
    </location>
</feature>
<feature type="transmembrane region" description="Helical" evidence="1">
    <location>
        <begin position="153"/>
        <end position="173"/>
    </location>
</feature>
<feature type="transmembrane region" description="Helical" evidence="1">
    <location>
        <begin position="186"/>
        <end position="206"/>
    </location>
</feature>
<proteinExistence type="predicted"/>
<protein>
    <recommendedName>
        <fullName>Uncharacterized protein MJ0706</fullName>
    </recommendedName>
</protein>
<evidence type="ECO:0000255" key="1"/>
<evidence type="ECO:0000305" key="2"/>